<sequence>MTKQFAVIGNPIEQSRSPELHHAFAEKTGVDLNYQKRLAPLDGFESSMRSFFAEGGSGMNVTVPFKEQAFALCDVLTERAQIAKAVNTLWMENGKLHGDNTDGQGLVAAIQALEWNLENTTILILGAGGATRGVIYPLVQAGTQKIVIANRTLARAEQLVDDLKTAVPQAQLQAISLNDLEGDFDIVINATSASLSGDALQLPEKLQFKYAYEMAYGKPSSFLDQAKQRNVPYSEGFGMLVGQAIEAFYIWNGVRPQLKDFL</sequence>
<evidence type="ECO:0000255" key="1">
    <source>
        <dbReference type="HAMAP-Rule" id="MF_00222"/>
    </source>
</evidence>
<proteinExistence type="inferred from homology"/>
<dbReference type="EC" id="1.1.1.25" evidence="1"/>
<dbReference type="EMBL" id="CP000521">
    <property type="protein sequence ID" value="ABO13506.2"/>
    <property type="molecule type" value="Genomic_DNA"/>
</dbReference>
<dbReference type="RefSeq" id="WP_000166015.1">
    <property type="nucleotide sequence ID" value="NZ_CACVBA010000001.1"/>
</dbReference>
<dbReference type="SMR" id="A3M9B2"/>
<dbReference type="KEGG" id="acb:A1S_3109"/>
<dbReference type="HOGENOM" id="CLU_044063_2_1_6"/>
<dbReference type="UniPathway" id="UPA00053">
    <property type="reaction ID" value="UER00087"/>
</dbReference>
<dbReference type="GO" id="GO:0005829">
    <property type="term" value="C:cytosol"/>
    <property type="evidence" value="ECO:0007669"/>
    <property type="project" value="TreeGrafter"/>
</dbReference>
<dbReference type="GO" id="GO:0050661">
    <property type="term" value="F:NADP binding"/>
    <property type="evidence" value="ECO:0007669"/>
    <property type="project" value="InterPro"/>
</dbReference>
<dbReference type="GO" id="GO:0004764">
    <property type="term" value="F:shikimate 3-dehydrogenase (NADP+) activity"/>
    <property type="evidence" value="ECO:0007669"/>
    <property type="project" value="UniProtKB-UniRule"/>
</dbReference>
<dbReference type="GO" id="GO:0008652">
    <property type="term" value="P:amino acid biosynthetic process"/>
    <property type="evidence" value="ECO:0007669"/>
    <property type="project" value="UniProtKB-KW"/>
</dbReference>
<dbReference type="GO" id="GO:0009073">
    <property type="term" value="P:aromatic amino acid family biosynthetic process"/>
    <property type="evidence" value="ECO:0007669"/>
    <property type="project" value="UniProtKB-KW"/>
</dbReference>
<dbReference type="GO" id="GO:0009423">
    <property type="term" value="P:chorismate biosynthetic process"/>
    <property type="evidence" value="ECO:0007669"/>
    <property type="project" value="UniProtKB-UniRule"/>
</dbReference>
<dbReference type="GO" id="GO:0019632">
    <property type="term" value="P:shikimate metabolic process"/>
    <property type="evidence" value="ECO:0007669"/>
    <property type="project" value="InterPro"/>
</dbReference>
<dbReference type="CDD" id="cd01065">
    <property type="entry name" value="NAD_bind_Shikimate_DH"/>
    <property type="match status" value="1"/>
</dbReference>
<dbReference type="FunFam" id="3.40.50.10860:FF:000006">
    <property type="entry name" value="Shikimate dehydrogenase (NADP(+))"/>
    <property type="match status" value="1"/>
</dbReference>
<dbReference type="Gene3D" id="3.40.50.10860">
    <property type="entry name" value="Leucine Dehydrogenase, chain A, domain 1"/>
    <property type="match status" value="1"/>
</dbReference>
<dbReference type="Gene3D" id="3.40.50.720">
    <property type="entry name" value="NAD(P)-binding Rossmann-like Domain"/>
    <property type="match status" value="1"/>
</dbReference>
<dbReference type="HAMAP" id="MF_00222">
    <property type="entry name" value="Shikimate_DH_AroE"/>
    <property type="match status" value="1"/>
</dbReference>
<dbReference type="InterPro" id="IPR046346">
    <property type="entry name" value="Aminoacid_DH-like_N_sf"/>
</dbReference>
<dbReference type="InterPro" id="IPR036291">
    <property type="entry name" value="NAD(P)-bd_dom_sf"/>
</dbReference>
<dbReference type="InterPro" id="IPR041121">
    <property type="entry name" value="SDH_C"/>
</dbReference>
<dbReference type="InterPro" id="IPR011342">
    <property type="entry name" value="Shikimate_DH"/>
</dbReference>
<dbReference type="InterPro" id="IPR013708">
    <property type="entry name" value="Shikimate_DH-bd_N"/>
</dbReference>
<dbReference type="InterPro" id="IPR022893">
    <property type="entry name" value="Shikimate_DH_fam"/>
</dbReference>
<dbReference type="InterPro" id="IPR006151">
    <property type="entry name" value="Shikm_DH/Glu-tRNA_Rdtase"/>
</dbReference>
<dbReference type="NCBIfam" id="TIGR00507">
    <property type="entry name" value="aroE"/>
    <property type="match status" value="1"/>
</dbReference>
<dbReference type="NCBIfam" id="NF001310">
    <property type="entry name" value="PRK00258.1-2"/>
    <property type="match status" value="1"/>
</dbReference>
<dbReference type="PANTHER" id="PTHR21089:SF1">
    <property type="entry name" value="BIFUNCTIONAL 3-DEHYDROQUINATE DEHYDRATASE_SHIKIMATE DEHYDROGENASE, CHLOROPLASTIC"/>
    <property type="match status" value="1"/>
</dbReference>
<dbReference type="PANTHER" id="PTHR21089">
    <property type="entry name" value="SHIKIMATE DEHYDROGENASE"/>
    <property type="match status" value="1"/>
</dbReference>
<dbReference type="Pfam" id="PF18317">
    <property type="entry name" value="SDH_C"/>
    <property type="match status" value="1"/>
</dbReference>
<dbReference type="Pfam" id="PF01488">
    <property type="entry name" value="Shikimate_DH"/>
    <property type="match status" value="1"/>
</dbReference>
<dbReference type="Pfam" id="PF08501">
    <property type="entry name" value="Shikimate_dh_N"/>
    <property type="match status" value="1"/>
</dbReference>
<dbReference type="SUPFAM" id="SSF53223">
    <property type="entry name" value="Aminoacid dehydrogenase-like, N-terminal domain"/>
    <property type="match status" value="1"/>
</dbReference>
<dbReference type="SUPFAM" id="SSF51735">
    <property type="entry name" value="NAD(P)-binding Rossmann-fold domains"/>
    <property type="match status" value="1"/>
</dbReference>
<gene>
    <name evidence="1" type="primary">aroE</name>
    <name type="ordered locus">A1S_3109</name>
</gene>
<keyword id="KW-0028">Amino-acid biosynthesis</keyword>
<keyword id="KW-0057">Aromatic amino acid biosynthesis</keyword>
<keyword id="KW-0521">NADP</keyword>
<keyword id="KW-0560">Oxidoreductase</keyword>
<accession>A3M9B2</accession>
<feature type="chain" id="PRO_1000100097" description="Shikimate dehydrogenase (NADP(+))">
    <location>
        <begin position="1"/>
        <end position="262"/>
    </location>
</feature>
<feature type="active site" description="Proton acceptor" evidence="1">
    <location>
        <position position="66"/>
    </location>
</feature>
<feature type="binding site" evidence="1">
    <location>
        <begin position="15"/>
        <end position="17"/>
    </location>
    <ligand>
        <name>shikimate</name>
        <dbReference type="ChEBI" id="CHEBI:36208"/>
    </ligand>
</feature>
<feature type="binding site" evidence="1">
    <location>
        <position position="62"/>
    </location>
    <ligand>
        <name>shikimate</name>
        <dbReference type="ChEBI" id="CHEBI:36208"/>
    </ligand>
</feature>
<feature type="binding site" evidence="1">
    <location>
        <position position="78"/>
    </location>
    <ligand>
        <name>NADP(+)</name>
        <dbReference type="ChEBI" id="CHEBI:58349"/>
    </ligand>
</feature>
<feature type="binding site" evidence="1">
    <location>
        <position position="87"/>
    </location>
    <ligand>
        <name>shikimate</name>
        <dbReference type="ChEBI" id="CHEBI:36208"/>
    </ligand>
</feature>
<feature type="binding site" evidence="1">
    <location>
        <position position="102"/>
    </location>
    <ligand>
        <name>shikimate</name>
        <dbReference type="ChEBI" id="CHEBI:36208"/>
    </ligand>
</feature>
<feature type="binding site" evidence="1">
    <location>
        <begin position="126"/>
        <end position="130"/>
    </location>
    <ligand>
        <name>NADP(+)</name>
        <dbReference type="ChEBI" id="CHEBI:58349"/>
    </ligand>
</feature>
<feature type="binding site" evidence="1">
    <location>
        <begin position="150"/>
        <end position="155"/>
    </location>
    <ligand>
        <name>NADP(+)</name>
        <dbReference type="ChEBI" id="CHEBI:58349"/>
    </ligand>
</feature>
<feature type="binding site" evidence="1">
    <location>
        <position position="214"/>
    </location>
    <ligand>
        <name>NADP(+)</name>
        <dbReference type="ChEBI" id="CHEBI:58349"/>
    </ligand>
</feature>
<feature type="binding site" evidence="1">
    <location>
        <position position="216"/>
    </location>
    <ligand>
        <name>shikimate</name>
        <dbReference type="ChEBI" id="CHEBI:36208"/>
    </ligand>
</feature>
<feature type="binding site" evidence="1">
    <location>
        <position position="236"/>
    </location>
    <ligand>
        <name>NADP(+)</name>
        <dbReference type="ChEBI" id="CHEBI:58349"/>
    </ligand>
</feature>
<protein>
    <recommendedName>
        <fullName evidence="1">Shikimate dehydrogenase (NADP(+))</fullName>
        <shortName evidence="1">SDH</shortName>
        <ecNumber evidence="1">1.1.1.25</ecNumber>
    </recommendedName>
</protein>
<comment type="function">
    <text evidence="1">Involved in the biosynthesis of the chorismate, which leads to the biosynthesis of aromatic amino acids. Catalyzes the reversible NADPH linked reduction of 3-dehydroshikimate (DHSA) to yield shikimate (SA).</text>
</comment>
<comment type="catalytic activity">
    <reaction evidence="1">
        <text>shikimate + NADP(+) = 3-dehydroshikimate + NADPH + H(+)</text>
        <dbReference type="Rhea" id="RHEA:17737"/>
        <dbReference type="ChEBI" id="CHEBI:15378"/>
        <dbReference type="ChEBI" id="CHEBI:16630"/>
        <dbReference type="ChEBI" id="CHEBI:36208"/>
        <dbReference type="ChEBI" id="CHEBI:57783"/>
        <dbReference type="ChEBI" id="CHEBI:58349"/>
        <dbReference type="EC" id="1.1.1.25"/>
    </reaction>
</comment>
<comment type="pathway">
    <text evidence="1">Metabolic intermediate biosynthesis; chorismate biosynthesis; chorismate from D-erythrose 4-phosphate and phosphoenolpyruvate: step 4/7.</text>
</comment>
<comment type="subunit">
    <text evidence="1">Homodimer.</text>
</comment>
<comment type="similarity">
    <text evidence="1">Belongs to the shikimate dehydrogenase family.</text>
</comment>
<organism>
    <name type="scientific">Acinetobacter baumannii (strain ATCC 17978 / DSM 105126 / CIP 53.77 / LMG 1025 / NCDC KC755 / 5377)</name>
    <dbReference type="NCBI Taxonomy" id="400667"/>
    <lineage>
        <taxon>Bacteria</taxon>
        <taxon>Pseudomonadati</taxon>
        <taxon>Pseudomonadota</taxon>
        <taxon>Gammaproteobacteria</taxon>
        <taxon>Moraxellales</taxon>
        <taxon>Moraxellaceae</taxon>
        <taxon>Acinetobacter</taxon>
        <taxon>Acinetobacter calcoaceticus/baumannii complex</taxon>
    </lineage>
</organism>
<reference key="1">
    <citation type="journal article" date="2007" name="Genes Dev.">
        <title>New insights into Acinetobacter baumannii pathogenesis revealed by high-density pyrosequencing and transposon mutagenesis.</title>
        <authorList>
            <person name="Smith M.G."/>
            <person name="Gianoulis T.A."/>
            <person name="Pukatzki S."/>
            <person name="Mekalanos J.J."/>
            <person name="Ornston L.N."/>
            <person name="Gerstein M."/>
            <person name="Snyder M."/>
        </authorList>
    </citation>
    <scope>NUCLEOTIDE SEQUENCE [LARGE SCALE GENOMIC DNA]</scope>
    <source>
        <strain>ATCC 17978 / DSM 105126 / CIP 53.77 / LMG 1025 / NCDC KC755 / 5377</strain>
    </source>
</reference>
<name>AROE_ACIBT</name>